<gene>
    <name type="primary">isdB</name>
    <name type="synonym">frpB</name>
    <name type="synonym">sasJ</name>
    <name type="synonym">sirH</name>
    <name type="ordered locus">SaurJH9_1188</name>
</gene>
<sequence length="645" mass="72162">MNKQQKEFKSFYSIRKSSLGVASVAISTLLLLMSNGEAQAAAEETGGTNTEAQPKTEAVASPTTTSEKAPETKPVANAVSVSNKEVEAPTSETKEAKEVKEVKAPKETKAVKPAAKATNNTYPILNQELREAIKNPAIKDKDHSAPNSRPIDFEMKKENGEQQFYHYASSVKPARVIFTDSKPEIELGLQSGQFWRKFEVYEGDKKLPIKLVSYDTVKDYAYIRFSVSNGTKAVKIVSSTHFNNKEEKYDYTLMEFAQPIYNSADKFKTEEDYKAEKLLAPYKKAKTLERQVYELNKIQDKLPEKLKAEYKKKLEDTKKALDEQVKSAITEFQNVQPTNEKMTDLQDTKYVVYESVENNESMMDTFVKHPIKTGMLNGKKYMVMETTNDDYWKDFMVEGQRVRTISKDAKNNTRTIIFPYVEGKTLYDAIVKVHVKTIDYDGQYHVRIVDKEAFTKANTDKSNKKEQQDNSAKKEATPATPSKPTPSPVEKESQKQDSQKDDNKQLPSVEKENDASSESGKDKTPATKPTKGEVESSSTTPTKVVSTTQNVAKPTTASSKTTKDVVQTSAGSSEAKDSAPLQKANIKNTNDGHTQSQNNKNTQENKAKSLPQTGEESNKDMTLPLMALLALSSIVAFVLPRKRKN</sequence>
<comment type="function">
    <text evidence="2">Cell wall-anchored surface receptor that extracts heme from oxidized metHb to enable growth on hemoglobin as a sole iron source. Rapidly extracts heme from hemoglobin and transfers it to IsdA or IsdC, which then relays it to the membrane transporter/IsdEF for internalization. Also promotes resistance to hydrogen peroxide and killing by neutrophils.</text>
</comment>
<comment type="subunit">
    <text evidence="2">Interacts with host HBA; this interaction allows heme extraction as iron source. Interacts with IsdA.</text>
</comment>
<comment type="subcellular location">
    <subcellularLocation>
        <location evidence="2">Secreted</location>
        <location evidence="2">Cell wall</location>
        <topology evidence="2">Peptidoglycan-anchor</topology>
    </subcellularLocation>
    <text evidence="2">Anchored to the cell wall by sortase A.</text>
</comment>
<comment type="induction">
    <text evidence="1">Repressed by fur in the presence of iron.</text>
</comment>
<comment type="similarity">
    <text evidence="9">Belongs to the IsdB family.</text>
</comment>
<reference key="1">
    <citation type="submission" date="2007-05" db="EMBL/GenBank/DDBJ databases">
        <title>Complete sequence of chromosome of Staphylococcus aureus subsp. aureus JH9.</title>
        <authorList>
            <consortium name="US DOE Joint Genome Institute"/>
            <person name="Copeland A."/>
            <person name="Lucas S."/>
            <person name="Lapidus A."/>
            <person name="Barry K."/>
            <person name="Detter J.C."/>
            <person name="Glavina del Rio T."/>
            <person name="Hammon N."/>
            <person name="Israni S."/>
            <person name="Pitluck S."/>
            <person name="Chain P."/>
            <person name="Malfatti S."/>
            <person name="Shin M."/>
            <person name="Vergez L."/>
            <person name="Schmutz J."/>
            <person name="Larimer F."/>
            <person name="Land M."/>
            <person name="Hauser L."/>
            <person name="Kyrpides N."/>
            <person name="Kim E."/>
            <person name="Tomasz A."/>
            <person name="Richardson P."/>
        </authorList>
    </citation>
    <scope>NUCLEOTIDE SEQUENCE [LARGE SCALE GENOMIC DNA]</scope>
    <source>
        <strain>JH9</strain>
    </source>
</reference>
<evidence type="ECO:0000250" key="1"/>
<evidence type="ECO:0000250" key="2">
    <source>
        <dbReference type="UniProtKB" id="A6QG30"/>
    </source>
</evidence>
<evidence type="ECO:0000250" key="3">
    <source>
        <dbReference type="UniProtKB" id="Q2FZF0"/>
    </source>
</evidence>
<evidence type="ECO:0000250" key="4">
    <source>
        <dbReference type="UniProtKB" id="Q7A656"/>
    </source>
</evidence>
<evidence type="ECO:0000255" key="5"/>
<evidence type="ECO:0000255" key="6">
    <source>
        <dbReference type="PROSITE-ProRule" id="PRU00337"/>
    </source>
</evidence>
<evidence type="ECO:0000255" key="7">
    <source>
        <dbReference type="PROSITE-ProRule" id="PRU00477"/>
    </source>
</evidence>
<evidence type="ECO:0000256" key="8">
    <source>
        <dbReference type="SAM" id="MobiDB-lite"/>
    </source>
</evidence>
<evidence type="ECO:0000305" key="9"/>
<organism>
    <name type="scientific">Staphylococcus aureus (strain JH9)</name>
    <dbReference type="NCBI Taxonomy" id="359786"/>
    <lineage>
        <taxon>Bacteria</taxon>
        <taxon>Bacillati</taxon>
        <taxon>Bacillota</taxon>
        <taxon>Bacilli</taxon>
        <taxon>Bacillales</taxon>
        <taxon>Staphylococcaceae</taxon>
        <taxon>Staphylococcus</taxon>
    </lineage>
</organism>
<feature type="signal peptide" evidence="5">
    <location>
        <begin position="1"/>
        <end position="40"/>
    </location>
</feature>
<feature type="chain" id="PRO_5000247261" description="Iron-regulated surface determinant protein B">
    <location>
        <begin position="41"/>
        <end position="613"/>
    </location>
</feature>
<feature type="propeptide" id="PRO_0000333245" description="Removed by sortase" evidence="7">
    <location>
        <begin position="614"/>
        <end position="645"/>
    </location>
</feature>
<feature type="domain" description="NEAT 1" evidence="6">
    <location>
        <begin position="144"/>
        <end position="269"/>
    </location>
</feature>
<feature type="domain" description="NEAT 2" evidence="6">
    <location>
        <begin position="341"/>
        <end position="458"/>
    </location>
</feature>
<feature type="region of interest" description="Disordered" evidence="8">
    <location>
        <begin position="38"/>
        <end position="113"/>
    </location>
</feature>
<feature type="region of interest" description="Disordered" evidence="8">
    <location>
        <begin position="458"/>
        <end position="619"/>
    </location>
</feature>
<feature type="short sequence motif" description="YSIRK-G/S signaling motif" evidence="3">
    <location>
        <begin position="12"/>
        <end position="23"/>
    </location>
</feature>
<feature type="short sequence motif" description="LPXTG sorting signal" evidence="7">
    <location>
        <begin position="610"/>
        <end position="614"/>
    </location>
</feature>
<feature type="compositionally biased region" description="Low complexity" evidence="8">
    <location>
        <begin position="38"/>
        <end position="53"/>
    </location>
</feature>
<feature type="compositionally biased region" description="Basic and acidic residues" evidence="8">
    <location>
        <begin position="84"/>
        <end position="110"/>
    </location>
</feature>
<feature type="compositionally biased region" description="Basic and acidic residues" evidence="8">
    <location>
        <begin position="458"/>
        <end position="476"/>
    </location>
</feature>
<feature type="compositionally biased region" description="Basic and acidic residues" evidence="8">
    <location>
        <begin position="489"/>
        <end position="534"/>
    </location>
</feature>
<feature type="compositionally biased region" description="Low complexity" evidence="8">
    <location>
        <begin position="535"/>
        <end position="560"/>
    </location>
</feature>
<feature type="compositionally biased region" description="Polar residues" evidence="8">
    <location>
        <begin position="585"/>
        <end position="615"/>
    </location>
</feature>
<feature type="binding site" description="axial binding residue" evidence="4">
    <location>
        <position position="362"/>
    </location>
    <ligand>
        <name>heme</name>
        <dbReference type="ChEBI" id="CHEBI:30413"/>
    </ligand>
    <ligandPart>
        <name>Fe</name>
        <dbReference type="ChEBI" id="CHEBI:18248"/>
    </ligandPart>
</feature>
<feature type="binding site" description="axial binding residue" evidence="4">
    <location>
        <position position="440"/>
    </location>
    <ligand>
        <name>heme</name>
        <dbReference type="ChEBI" id="CHEBI:30413"/>
    </ligand>
    <ligandPart>
        <name>Fe</name>
        <dbReference type="ChEBI" id="CHEBI:18248"/>
    </ligandPart>
</feature>
<feature type="modified residue" description="Pentaglycyl murein peptidoglycan amidated threonine" evidence="7">
    <location>
        <position position="613"/>
    </location>
</feature>
<protein>
    <recommendedName>
        <fullName>Iron-regulated surface determinant protein B</fullName>
    </recommendedName>
    <alternativeName>
        <fullName>Fur-regulated protein B</fullName>
    </alternativeName>
    <alternativeName>
        <fullName>Staphylococcal iron-regulated protein H</fullName>
    </alternativeName>
    <alternativeName>
        <fullName>Staphylococcus aureus surface protein J</fullName>
    </alternativeName>
</protein>
<name>ISDB_STAA9</name>
<accession>A5IS15</accession>
<dbReference type="EMBL" id="CP000703">
    <property type="protein sequence ID" value="ABQ48988.1"/>
    <property type="molecule type" value="Genomic_DNA"/>
</dbReference>
<dbReference type="RefSeq" id="WP_001041583.1">
    <property type="nucleotide sequence ID" value="NC_009487.1"/>
</dbReference>
<dbReference type="BMRB" id="A5IS15"/>
<dbReference type="SMR" id="A5IS15"/>
<dbReference type="KEGG" id="saj:SaurJH9_1188"/>
<dbReference type="HOGENOM" id="CLU_016167_0_0_9"/>
<dbReference type="PRO" id="PR:A5IS15"/>
<dbReference type="GO" id="GO:0005576">
    <property type="term" value="C:extracellular region"/>
    <property type="evidence" value="ECO:0007669"/>
    <property type="project" value="UniProtKB-KW"/>
</dbReference>
<dbReference type="GO" id="GO:0015232">
    <property type="term" value="F:heme transmembrane transporter activity"/>
    <property type="evidence" value="ECO:0007669"/>
    <property type="project" value="InterPro"/>
</dbReference>
<dbReference type="GO" id="GO:0046872">
    <property type="term" value="F:metal ion binding"/>
    <property type="evidence" value="ECO:0007669"/>
    <property type="project" value="UniProtKB-KW"/>
</dbReference>
<dbReference type="CDD" id="cd06920">
    <property type="entry name" value="NEAT"/>
    <property type="match status" value="1"/>
</dbReference>
<dbReference type="Gene3D" id="1.20.58.1270">
    <property type="match status" value="1"/>
</dbReference>
<dbReference type="Gene3D" id="2.60.40.1850">
    <property type="match status" value="2"/>
</dbReference>
<dbReference type="InterPro" id="IPR019929">
    <property type="entry name" value="Iron-reg_IsdB"/>
</dbReference>
<dbReference type="InterPro" id="IPR048652">
    <property type="entry name" value="Isd_H_B_linker"/>
</dbReference>
<dbReference type="InterPro" id="IPR050436">
    <property type="entry name" value="IsdA"/>
</dbReference>
<dbReference type="InterPro" id="IPR019931">
    <property type="entry name" value="LPXTG_anchor"/>
</dbReference>
<dbReference type="InterPro" id="IPR006635">
    <property type="entry name" value="NEAT_dom"/>
</dbReference>
<dbReference type="InterPro" id="IPR037250">
    <property type="entry name" value="NEAT_dom_sf"/>
</dbReference>
<dbReference type="InterPro" id="IPR005877">
    <property type="entry name" value="YSIRK_signal_dom"/>
</dbReference>
<dbReference type="NCBIfam" id="TIGR03657">
    <property type="entry name" value="IsdB"/>
    <property type="match status" value="1"/>
</dbReference>
<dbReference type="NCBIfam" id="TIGR01167">
    <property type="entry name" value="LPXTG_anchor"/>
    <property type="match status" value="1"/>
</dbReference>
<dbReference type="NCBIfam" id="TIGR01168">
    <property type="entry name" value="YSIRK_signal"/>
    <property type="match status" value="1"/>
</dbReference>
<dbReference type="PANTHER" id="PTHR37824">
    <property type="entry name" value="IRON-REGULATED SURFACE DETERMINANT PROTEIN C"/>
    <property type="match status" value="1"/>
</dbReference>
<dbReference type="PANTHER" id="PTHR37824:SF1">
    <property type="entry name" value="IRON-REGULATED SURFACE DETERMINANT PROTEIN C"/>
    <property type="match status" value="1"/>
</dbReference>
<dbReference type="Pfam" id="PF00746">
    <property type="entry name" value="Gram_pos_anchor"/>
    <property type="match status" value="1"/>
</dbReference>
<dbReference type="Pfam" id="PF20861">
    <property type="entry name" value="Isd_H_B_linker"/>
    <property type="match status" value="1"/>
</dbReference>
<dbReference type="Pfam" id="PF05031">
    <property type="entry name" value="NEAT"/>
    <property type="match status" value="2"/>
</dbReference>
<dbReference type="Pfam" id="PF04650">
    <property type="entry name" value="YSIRK_signal"/>
    <property type="match status" value="1"/>
</dbReference>
<dbReference type="SMART" id="SM00725">
    <property type="entry name" value="NEAT"/>
    <property type="match status" value="2"/>
</dbReference>
<dbReference type="SUPFAM" id="SSF158911">
    <property type="entry name" value="NEAT domain-like"/>
    <property type="match status" value="2"/>
</dbReference>
<dbReference type="PROSITE" id="PS50847">
    <property type="entry name" value="GRAM_POS_ANCHORING"/>
    <property type="match status" value="1"/>
</dbReference>
<dbReference type="PROSITE" id="PS50978">
    <property type="entry name" value="NEAT"/>
    <property type="match status" value="2"/>
</dbReference>
<proteinExistence type="inferred from homology"/>
<keyword id="KW-0134">Cell wall</keyword>
<keyword id="KW-0349">Heme</keyword>
<keyword id="KW-0408">Iron</keyword>
<keyword id="KW-0479">Metal-binding</keyword>
<keyword id="KW-0572">Peptidoglycan-anchor</keyword>
<keyword id="KW-0677">Repeat</keyword>
<keyword id="KW-0964">Secreted</keyword>
<keyword id="KW-0732">Signal</keyword>
<keyword id="KW-0843">Virulence</keyword>